<reference key="1">
    <citation type="submission" date="2000-04" db="EMBL/GenBank/DDBJ databases">
        <title>A cDNA clone encoding proliferating cell nuclear antigen (PCNA) from lombardy poplar.</title>
        <authorList>
            <person name="Nishiguchi M."/>
        </authorList>
    </citation>
    <scope>NUCLEOTIDE SEQUENCE [MRNA]</scope>
</reference>
<organism>
    <name type="scientific">Populus nigra</name>
    <name type="common">Lombardy poplar</name>
    <dbReference type="NCBI Taxonomy" id="3691"/>
    <lineage>
        <taxon>Eukaryota</taxon>
        <taxon>Viridiplantae</taxon>
        <taxon>Streptophyta</taxon>
        <taxon>Embryophyta</taxon>
        <taxon>Tracheophyta</taxon>
        <taxon>Spermatophyta</taxon>
        <taxon>Magnoliopsida</taxon>
        <taxon>eudicotyledons</taxon>
        <taxon>Gunneridae</taxon>
        <taxon>Pentapetalae</taxon>
        <taxon>rosids</taxon>
        <taxon>fabids</taxon>
        <taxon>Malpighiales</taxon>
        <taxon>Salicaceae</taxon>
        <taxon>Saliceae</taxon>
        <taxon>Populus</taxon>
    </lineage>
</organism>
<sequence length="264" mass="29139">MLELRLVQGSLLKKVLESIKDLVNDANFDFSSSGFSLQSMDSSHVALVALLLKSEGFEHYRCDRNTSMGMNLGNMSKMLKCAGNDDIITIKGDDGSDTVTFMFESPTQDKIADFEMKLMDIDSEHLGIPEAEYHAIVKMPSAEFARICKDLASIGDTVVISVTKEGVKFSTRGDIGTANIVLRQNTTVDKPEDATVIEMNEPVSMTFALRYMNSFTKATPLSNTVTISMSPDLPVVVEYKIAEMGYVRFYLAPKMEEDEPEPGA</sequence>
<accession>Q9MAY3</accession>
<evidence type="ECO:0000250" key="1"/>
<evidence type="ECO:0000255" key="2"/>
<evidence type="ECO:0000305" key="3"/>
<dbReference type="EMBL" id="AB041506">
    <property type="protein sequence ID" value="BAA94512.1"/>
    <property type="molecule type" value="mRNA"/>
</dbReference>
<dbReference type="SMR" id="Q9MAY3"/>
<dbReference type="GO" id="GO:0043626">
    <property type="term" value="C:PCNA complex"/>
    <property type="evidence" value="ECO:0007669"/>
    <property type="project" value="TreeGrafter"/>
</dbReference>
<dbReference type="GO" id="GO:0003677">
    <property type="term" value="F:DNA binding"/>
    <property type="evidence" value="ECO:0007669"/>
    <property type="project" value="UniProtKB-KW"/>
</dbReference>
<dbReference type="GO" id="GO:0030337">
    <property type="term" value="F:DNA polymerase processivity factor activity"/>
    <property type="evidence" value="ECO:0007669"/>
    <property type="project" value="InterPro"/>
</dbReference>
<dbReference type="GO" id="GO:0006272">
    <property type="term" value="P:leading strand elongation"/>
    <property type="evidence" value="ECO:0007669"/>
    <property type="project" value="TreeGrafter"/>
</dbReference>
<dbReference type="GO" id="GO:0006298">
    <property type="term" value="P:mismatch repair"/>
    <property type="evidence" value="ECO:0007669"/>
    <property type="project" value="TreeGrafter"/>
</dbReference>
<dbReference type="GO" id="GO:0006275">
    <property type="term" value="P:regulation of DNA replication"/>
    <property type="evidence" value="ECO:0007669"/>
    <property type="project" value="InterPro"/>
</dbReference>
<dbReference type="GO" id="GO:0019985">
    <property type="term" value="P:translesion synthesis"/>
    <property type="evidence" value="ECO:0007669"/>
    <property type="project" value="TreeGrafter"/>
</dbReference>
<dbReference type="CDD" id="cd00577">
    <property type="entry name" value="PCNA"/>
    <property type="match status" value="1"/>
</dbReference>
<dbReference type="FunFam" id="3.70.10.10:FF:000001">
    <property type="entry name" value="Proliferating cell nuclear antigen"/>
    <property type="match status" value="1"/>
</dbReference>
<dbReference type="Gene3D" id="3.70.10.10">
    <property type="match status" value="1"/>
</dbReference>
<dbReference type="HAMAP" id="MF_00317">
    <property type="entry name" value="DNApol_clamp_arch"/>
    <property type="match status" value="1"/>
</dbReference>
<dbReference type="InterPro" id="IPR046938">
    <property type="entry name" value="DNA_clamp_sf"/>
</dbReference>
<dbReference type="InterPro" id="IPR000730">
    <property type="entry name" value="Pr_cel_nuc_antig"/>
</dbReference>
<dbReference type="InterPro" id="IPR022649">
    <property type="entry name" value="Pr_cel_nuc_antig_C"/>
</dbReference>
<dbReference type="InterPro" id="IPR022659">
    <property type="entry name" value="Pr_cel_nuc_antig_CS"/>
</dbReference>
<dbReference type="InterPro" id="IPR022648">
    <property type="entry name" value="Pr_cel_nuc_antig_N"/>
</dbReference>
<dbReference type="NCBIfam" id="TIGR00590">
    <property type="entry name" value="pcna"/>
    <property type="match status" value="1"/>
</dbReference>
<dbReference type="PANTHER" id="PTHR11352">
    <property type="entry name" value="PROLIFERATING CELL NUCLEAR ANTIGEN"/>
    <property type="match status" value="1"/>
</dbReference>
<dbReference type="PANTHER" id="PTHR11352:SF0">
    <property type="entry name" value="PROLIFERATING CELL NUCLEAR ANTIGEN"/>
    <property type="match status" value="1"/>
</dbReference>
<dbReference type="Pfam" id="PF02747">
    <property type="entry name" value="PCNA_C"/>
    <property type="match status" value="1"/>
</dbReference>
<dbReference type="Pfam" id="PF00705">
    <property type="entry name" value="PCNA_N"/>
    <property type="match status" value="1"/>
</dbReference>
<dbReference type="PRINTS" id="PR00339">
    <property type="entry name" value="PCNACYCLIN"/>
</dbReference>
<dbReference type="SUPFAM" id="SSF55979">
    <property type="entry name" value="DNA clamp"/>
    <property type="match status" value="2"/>
</dbReference>
<dbReference type="PROSITE" id="PS01251">
    <property type="entry name" value="PCNA_1"/>
    <property type="match status" value="1"/>
</dbReference>
<dbReference type="PROSITE" id="PS00293">
    <property type="entry name" value="PCNA_2"/>
    <property type="match status" value="1"/>
</dbReference>
<proteinExistence type="evidence at transcript level"/>
<keyword id="KW-0235">DNA replication</keyword>
<keyword id="KW-0238">DNA-binding</keyword>
<keyword id="KW-0539">Nucleus</keyword>
<feature type="chain" id="PRO_0000149186" description="Proliferating cell nuclear antigen">
    <location>
        <begin position="1"/>
        <end position="264"/>
    </location>
</feature>
<feature type="DNA-binding region" evidence="2">
    <location>
        <begin position="61"/>
        <end position="80"/>
    </location>
</feature>
<protein>
    <recommendedName>
        <fullName>Proliferating cell nuclear antigen</fullName>
        <shortName>PCNA</shortName>
    </recommendedName>
</protein>
<gene>
    <name type="primary">PCNA</name>
</gene>
<comment type="function">
    <text evidence="1">This protein is an auxiliary protein of DNA polymerase delta and is involved in the control of eukaryotic DNA replication by increasing the polymerase's processibility during elongation of the leading strand.</text>
</comment>
<comment type="subcellular location">
    <subcellularLocation>
        <location>Nucleus</location>
    </subcellularLocation>
</comment>
<comment type="similarity">
    <text evidence="3">Belongs to the PCNA family.</text>
</comment>
<name>PCNA_POPNI</name>